<accession>Q95MI5</accession>
<accession>Q9MYM6</accession>
<sequence>MDNQGVIYSDLNLPPNPKRQQRKPKGNKSSILATEQEITYAELNLQKASQDFQENDKTYHCKDLPSAPEKLIVGILGIICLILMASVVTIVVIPSTLIQRHNNSSLNTRTQKARHCGHCPEEWITYSNSCYYIGKERRTWEESLLACTSKNSGLLSIDNEEEMKFLSIISPSSWIGVFRNSSHHPWVTINGLAFKHEIKDSDNAELNCAVLQVNGLKSAQCGSSIIYHCKHKL</sequence>
<comment type="function">
    <text evidence="1">Immune inhibitory receptor involved in self-nonself discrimination. In complex with KLRD1 on cytotoxic and regulatory lymphocyte subsets, recognizes non-classical major histocompatibility (MHC) class Ib molecule MHC-E loaded with self-peptides derived from the signal sequence of classical MHC class Ia molecules. Enables cytotoxic cells to monitor the expression of MHC class I molecules in healthy cells and to tolerate self. Upon MHC-E-peptide binding, transmits intracellular signals through two immunoreceptor tyrosine-based inhibition motifs (ITIMs) by recruiting INPP5D/SHP-1 and INPPL1/SHP-2 tyrosine phosphatases to ITIMs, and ultimately opposing signals transmitted by activating receptors through dephosphorylation of proximal signaling molecules. Key inhibitory receptor on natural killer (NK) cells that regulates their activation and effector functions. Dominantly counteracts T cell receptor signaling on a subset of memory/effector CD8-positive T cells as part of an antigen-driven response to avoid autoimmunity. On intraepithelial CD8-positive gamma-delta regulatory T cells triggers TGFB1 secretion, which in turn limits the cytotoxic programming of intraepithelial CD8-positive alpha-beta T cells, distinguishing harmless from pathogenic antigens. In MHC-E-rich tumor microenvironment, acts as an immune inhibitory checkpoint and may contribute to progressive loss of effector functions of NK cells and tumor-specific T cells, a state known as cell exhaustion.</text>
</comment>
<comment type="subunit">
    <text evidence="1">Heterodimer with KLRD1; disulfide-linked. KLRD1-KLRC1 heterodimer interacts with peptide-bound MHC-E-B2M heterotrimeric complex. Competes with KLRC2 for its interaction with MHC-E. Interacts (via ITIM) with INPP5D/SHIP-1 and INPPL1/SHIP-2 (via SH2 domain).</text>
</comment>
<comment type="subcellular location">
    <subcellularLocation>
        <location evidence="1">Cell membrane</location>
        <topology evidence="2">Single-pass type II membrane protein</topology>
    </subcellularLocation>
</comment>
<comment type="alternative products">
    <event type="alternative splicing"/>
    <isoform>
        <id>Q95MI5-1</id>
        <name>NKG2-A</name>
        <sequence type="displayed"/>
    </isoform>
    <isoform>
        <id>Q95MI5-2</id>
        <name>NKG2-B</name>
        <sequence type="described" ref="VSP_003066"/>
    </isoform>
</comment>
<comment type="tissue specificity">
    <text>Natural killer cells.</text>
</comment>
<comment type="domain">
    <text evidence="1">The cytosolic N-terminus contains two immunoreceptor tyrosine-based inhibitory motifs (ITIMs), which are essential for the association with INPP5D/SHIP-1 and INPPL1/SHIP-2 phosphatases and functional inhibition.</text>
</comment>
<comment type="PTM">
    <text evidence="1">Phosphorylated.</text>
</comment>
<keyword id="KW-1064">Adaptive immunity</keyword>
<keyword id="KW-0025">Alternative splicing</keyword>
<keyword id="KW-1003">Cell membrane</keyword>
<keyword id="KW-1015">Disulfide bond</keyword>
<keyword id="KW-0325">Glycoprotein</keyword>
<keyword id="KW-0391">Immunity</keyword>
<keyword id="KW-0399">Innate immunity</keyword>
<keyword id="KW-0430">Lectin</keyword>
<keyword id="KW-0472">Membrane</keyword>
<keyword id="KW-0597">Phosphoprotein</keyword>
<keyword id="KW-0675">Receptor</keyword>
<keyword id="KW-1185">Reference proteome</keyword>
<keyword id="KW-0735">Signal-anchor</keyword>
<keyword id="KW-0812">Transmembrane</keyword>
<keyword id="KW-1133">Transmembrane helix</keyword>
<proteinExistence type="evidence at transcript level"/>
<name>NKG2A_PANTR</name>
<feature type="chain" id="PRO_0000046661" description="NKG2-A/NKG2-B type II integral membrane protein">
    <location>
        <begin position="1"/>
        <end position="233"/>
    </location>
</feature>
<feature type="topological domain" description="Cytoplasmic" evidence="2">
    <location>
        <begin position="1"/>
        <end position="70"/>
    </location>
</feature>
<feature type="transmembrane region" description="Helical; Signal-anchor for type II membrane protein" evidence="2">
    <location>
        <begin position="71"/>
        <end position="93"/>
    </location>
</feature>
<feature type="topological domain" description="Extracellular" evidence="2">
    <location>
        <begin position="94"/>
        <end position="233"/>
    </location>
</feature>
<feature type="domain" description="C-type lectin" evidence="3">
    <location>
        <begin position="118"/>
        <end position="231"/>
    </location>
</feature>
<feature type="region of interest" description="Disordered" evidence="4">
    <location>
        <begin position="1"/>
        <end position="30"/>
    </location>
</feature>
<feature type="short sequence motif" description="Immunoreceptor tyrosine-based inhibition motif (ITIM)" evidence="1">
    <location>
        <begin position="6"/>
        <end position="11"/>
    </location>
</feature>
<feature type="short sequence motif" description="Immunoreceptor tyrosine-based inhibition motif (ITIM)" evidence="1">
    <location>
        <begin position="38"/>
        <end position="43"/>
    </location>
</feature>
<feature type="modified residue" description="Phosphotyrosine" evidence="1">
    <location>
        <position position="8"/>
    </location>
</feature>
<feature type="modified residue" description="Phosphotyrosine" evidence="1">
    <location>
        <position position="40"/>
    </location>
</feature>
<feature type="glycosylation site" description="N-linked (GlcNAc...) asparagine" evidence="2">
    <location>
        <position position="102"/>
    </location>
</feature>
<feature type="glycosylation site" description="N-linked (GlcNAc...) asparagine" evidence="2">
    <location>
        <position position="103"/>
    </location>
</feature>
<feature type="glycosylation site" description="N-linked (GlcNAc...) asparagine" evidence="2">
    <location>
        <position position="180"/>
    </location>
</feature>
<feature type="disulfide bond" description="Interchain (with C-59 in KLRD1)" evidence="3">
    <location>
        <position position="116"/>
    </location>
</feature>
<feature type="disulfide bond" evidence="3">
    <location>
        <begin position="119"/>
        <end position="130"/>
    </location>
</feature>
<feature type="disulfide bond" evidence="3">
    <location>
        <begin position="147"/>
        <end position="229"/>
    </location>
</feature>
<feature type="disulfide bond" evidence="3">
    <location>
        <begin position="208"/>
        <end position="221"/>
    </location>
</feature>
<feature type="splice variant" id="VSP_003066" description="In isoform NKG2-B." evidence="6">
    <location>
        <begin position="96"/>
        <end position="113"/>
    </location>
</feature>
<feature type="sequence variant" id="VAR_018698" description="In allele NKG2-A*03." evidence="5">
    <original>I</original>
    <variation>L</variation>
    <location>
        <position position="79"/>
    </location>
</feature>
<feature type="sequence variant" id="VAR_018699" description="In allele NKG2-A*03." evidence="5">
    <original>H</original>
    <variation>R</variation>
    <location>
        <position position="231"/>
    </location>
</feature>
<evidence type="ECO:0000250" key="1">
    <source>
        <dbReference type="UniProtKB" id="P26715"/>
    </source>
</evidence>
<evidence type="ECO:0000255" key="2"/>
<evidence type="ECO:0000255" key="3">
    <source>
        <dbReference type="PROSITE-ProRule" id="PRU00040"/>
    </source>
</evidence>
<evidence type="ECO:0000256" key="4">
    <source>
        <dbReference type="SAM" id="MobiDB-lite"/>
    </source>
</evidence>
<evidence type="ECO:0000269" key="5">
    <source>
    </source>
</evidence>
<evidence type="ECO:0000305" key="6"/>
<dbReference type="EMBL" id="AF259055">
    <property type="protein sequence ID" value="AAF86965.1"/>
    <property type="molecule type" value="mRNA"/>
</dbReference>
<dbReference type="EMBL" id="AF259056">
    <property type="protein sequence ID" value="AAF86966.1"/>
    <property type="molecule type" value="mRNA"/>
</dbReference>
<dbReference type="EMBL" id="AF350005">
    <property type="protein sequence ID" value="AAK83792.1"/>
    <property type="molecule type" value="mRNA"/>
</dbReference>
<dbReference type="RefSeq" id="NP_001009048.2">
    <molecule id="Q95MI5-1"/>
    <property type="nucleotide sequence ID" value="NM_001009048.2"/>
</dbReference>
<dbReference type="RefSeq" id="XP_009423042.2">
    <property type="nucleotide sequence ID" value="XM_009424767.2"/>
</dbReference>
<dbReference type="SMR" id="Q95MI5"/>
<dbReference type="FunCoup" id="Q95MI5">
    <property type="interactions" value="216"/>
</dbReference>
<dbReference type="STRING" id="9598.ENSPTRP00000059579"/>
<dbReference type="GlyCosmos" id="Q95MI5">
    <property type="glycosylation" value="3 sites, No reported glycans"/>
</dbReference>
<dbReference type="PaxDb" id="9598-ENSPTRP00000054743"/>
<dbReference type="Ensembl" id="ENSPTRT00000062196.3">
    <molecule id="Q95MI5-2"/>
    <property type="protein sequence ID" value="ENSPTRP00000054750.3"/>
    <property type="gene ID" value="ENSPTRG00000029778.5"/>
</dbReference>
<dbReference type="Ensembl" id="ENSPTRT00000067984.3">
    <molecule id="Q95MI5-1"/>
    <property type="protein sequence ID" value="ENSPTRP00000059579.3"/>
    <property type="gene ID" value="ENSPTRG00000029778.5"/>
</dbReference>
<dbReference type="GeneID" id="450131"/>
<dbReference type="CTD" id="3821"/>
<dbReference type="eggNOG" id="ENOG502S6IE">
    <property type="taxonomic scope" value="Eukaryota"/>
</dbReference>
<dbReference type="GeneTree" id="ENSGT00940000164619"/>
<dbReference type="HOGENOM" id="CLU_049894_9_2_1"/>
<dbReference type="InParanoid" id="Q95MI5"/>
<dbReference type="OMA" id="ITSWIPV"/>
<dbReference type="TreeFam" id="TF336674"/>
<dbReference type="Proteomes" id="UP000002277">
    <property type="component" value="Chromosome 12"/>
</dbReference>
<dbReference type="Bgee" id="ENSPTRG00000029778">
    <property type="expression patterns" value="Expressed in prefrontal cortex and 11 other cell types or tissues"/>
</dbReference>
<dbReference type="GO" id="GO:0009897">
    <property type="term" value="C:external side of plasma membrane"/>
    <property type="evidence" value="ECO:0000318"/>
    <property type="project" value="GO_Central"/>
</dbReference>
<dbReference type="GO" id="GO:0005886">
    <property type="term" value="C:plasma membrane"/>
    <property type="evidence" value="ECO:0000250"/>
    <property type="project" value="UniProtKB"/>
</dbReference>
<dbReference type="GO" id="GO:0043235">
    <property type="term" value="C:receptor complex"/>
    <property type="evidence" value="ECO:0007669"/>
    <property type="project" value="Ensembl"/>
</dbReference>
<dbReference type="GO" id="GO:0030246">
    <property type="term" value="F:carbohydrate binding"/>
    <property type="evidence" value="ECO:0007669"/>
    <property type="project" value="UniProtKB-KW"/>
</dbReference>
<dbReference type="GO" id="GO:0062082">
    <property type="term" value="F:HLA-E specific inhibitory MHC class Ib receptor activity"/>
    <property type="evidence" value="ECO:0000250"/>
    <property type="project" value="UniProtKB"/>
</dbReference>
<dbReference type="GO" id="GO:0023024">
    <property type="term" value="F:MHC class I protein complex binding"/>
    <property type="evidence" value="ECO:0007669"/>
    <property type="project" value="Ensembl"/>
</dbReference>
<dbReference type="GO" id="GO:0004888">
    <property type="term" value="F:transmembrane signaling receptor activity"/>
    <property type="evidence" value="ECO:0000318"/>
    <property type="project" value="GO_Central"/>
</dbReference>
<dbReference type="GO" id="GO:0002250">
    <property type="term" value="P:adaptive immune response"/>
    <property type="evidence" value="ECO:0007669"/>
    <property type="project" value="UniProtKB-KW"/>
</dbReference>
<dbReference type="GO" id="GO:0002305">
    <property type="term" value="P:CD8-positive, gamma-delta intraepithelial T cell differentiation"/>
    <property type="evidence" value="ECO:0000250"/>
    <property type="project" value="UniProtKB"/>
</dbReference>
<dbReference type="GO" id="GO:0045087">
    <property type="term" value="P:innate immune response"/>
    <property type="evidence" value="ECO:0007669"/>
    <property type="project" value="UniProtKB-KW"/>
</dbReference>
<dbReference type="GO" id="GO:0002769">
    <property type="term" value="P:natural killer cell inhibitory signaling pathway"/>
    <property type="evidence" value="ECO:0007669"/>
    <property type="project" value="Ensembl"/>
</dbReference>
<dbReference type="GO" id="GO:0045953">
    <property type="term" value="P:negative regulation of natural killer cell mediated cytotoxicity"/>
    <property type="evidence" value="ECO:0000250"/>
    <property type="project" value="UniProtKB"/>
</dbReference>
<dbReference type="GO" id="GO:0001915">
    <property type="term" value="P:negative regulation of T cell mediated cytotoxicity"/>
    <property type="evidence" value="ECO:0000250"/>
    <property type="project" value="UniProtKB"/>
</dbReference>
<dbReference type="GO" id="GO:0045954">
    <property type="term" value="P:positive regulation of natural killer cell mediated cytotoxicity"/>
    <property type="evidence" value="ECO:0000318"/>
    <property type="project" value="GO_Central"/>
</dbReference>
<dbReference type="GO" id="GO:0002223">
    <property type="term" value="P:stimulatory C-type lectin receptor signaling pathway"/>
    <property type="evidence" value="ECO:0000318"/>
    <property type="project" value="GO_Central"/>
</dbReference>
<dbReference type="CDD" id="cd03593">
    <property type="entry name" value="CLECT_NK_receptors_like"/>
    <property type="match status" value="1"/>
</dbReference>
<dbReference type="FunFam" id="3.10.100.10:FF:000071">
    <property type="entry name" value="NKG2-A/NKG2-B type II integral membrane protein"/>
    <property type="match status" value="1"/>
</dbReference>
<dbReference type="Gene3D" id="3.10.100.10">
    <property type="entry name" value="Mannose-Binding Protein A, subunit A"/>
    <property type="match status" value="1"/>
</dbReference>
<dbReference type="InterPro" id="IPR001304">
    <property type="entry name" value="C-type_lectin-like"/>
</dbReference>
<dbReference type="InterPro" id="IPR016186">
    <property type="entry name" value="C-type_lectin-like/link_sf"/>
</dbReference>
<dbReference type="InterPro" id="IPR016187">
    <property type="entry name" value="CTDL_fold"/>
</dbReference>
<dbReference type="InterPro" id="IPR050919">
    <property type="entry name" value="NKG2/CD94_NK_receptors"/>
</dbReference>
<dbReference type="InterPro" id="IPR033992">
    <property type="entry name" value="NKR-like_CTLD"/>
</dbReference>
<dbReference type="PANTHER" id="PTHR22800">
    <property type="entry name" value="C-TYPE LECTIN PROTEINS"/>
    <property type="match status" value="1"/>
</dbReference>
<dbReference type="PANTHER" id="PTHR22800:SF242">
    <property type="entry name" value="NKG2-A_NKG2-B TYPE II INTEGRAL MEMBRANE PROTEIN"/>
    <property type="match status" value="1"/>
</dbReference>
<dbReference type="Pfam" id="PF00059">
    <property type="entry name" value="Lectin_C"/>
    <property type="match status" value="1"/>
</dbReference>
<dbReference type="SMART" id="SM00034">
    <property type="entry name" value="CLECT"/>
    <property type="match status" value="1"/>
</dbReference>
<dbReference type="SUPFAM" id="SSF56436">
    <property type="entry name" value="C-type lectin-like"/>
    <property type="match status" value="1"/>
</dbReference>
<dbReference type="PROSITE" id="PS50041">
    <property type="entry name" value="C_TYPE_LECTIN_2"/>
    <property type="match status" value="1"/>
</dbReference>
<protein>
    <recommendedName>
        <fullName>NKG2-A/NKG2-B type II integral membrane protein</fullName>
    </recommendedName>
    <alternativeName>
        <fullName>CD159 antigen-like family member A</fullName>
    </alternativeName>
    <alternativeName>
        <fullName>NK cell receptor A</fullName>
    </alternativeName>
    <alternativeName>
        <fullName>NKG2-A/B-activating NK receptor</fullName>
    </alternativeName>
    <cdAntigenName>CD159a</cdAntigenName>
</protein>
<organism>
    <name type="scientific">Pan troglodytes</name>
    <name type="common">Chimpanzee</name>
    <dbReference type="NCBI Taxonomy" id="9598"/>
    <lineage>
        <taxon>Eukaryota</taxon>
        <taxon>Metazoa</taxon>
        <taxon>Chordata</taxon>
        <taxon>Craniata</taxon>
        <taxon>Vertebrata</taxon>
        <taxon>Euteleostomi</taxon>
        <taxon>Mammalia</taxon>
        <taxon>Eutheria</taxon>
        <taxon>Euarchontoglires</taxon>
        <taxon>Primates</taxon>
        <taxon>Haplorrhini</taxon>
        <taxon>Catarrhini</taxon>
        <taxon>Hominidae</taxon>
        <taxon>Pan</taxon>
    </lineage>
</organism>
<reference key="1">
    <citation type="journal article" date="2000" name="Immunity">
        <title>Rapid evolution of NK cell receptor systems demonstrated by comparison of chimpanzees and humans.</title>
        <authorList>
            <person name="Khakoo S.I."/>
            <person name="Rajalingam R."/>
            <person name="Shum B.P."/>
            <person name="Weidenbach K."/>
            <person name="Flodin L."/>
            <person name="Muir D.G."/>
            <person name="Canavez F."/>
            <person name="Cooper S.L."/>
            <person name="Valiante N.M."/>
            <person name="Lanier L.L."/>
            <person name="Parham P."/>
        </authorList>
    </citation>
    <scope>NUCLEOTIDE SEQUENCE [MRNA]</scope>
</reference>
<reference key="2">
    <citation type="journal article" date="2002" name="J. Immunol.">
        <title>Conservation and variation in human and common chimpanzee CD94 and NKG2 genes.</title>
        <authorList>
            <person name="Shum B.P."/>
            <person name="Flodin L.R."/>
            <person name="Muir D.G."/>
            <person name="Rajalingam R."/>
            <person name="Khakoo S.I."/>
            <person name="Cleland S."/>
            <person name="Guethlein L.A."/>
            <person name="Uhrberg M."/>
            <person name="Parham P."/>
        </authorList>
    </citation>
    <scope>NUCLEOTIDE SEQUENCE [MRNA]</scope>
    <scope>ALTERNATIVE SPLICING</scope>
    <scope>VARIANTS LEU-79 AND ARG-231</scope>
</reference>
<gene>
    <name type="primary">KLRC1</name>
    <name type="synonym">NKG2A</name>
</gene>